<protein>
    <recommendedName>
        <fullName>Peroxiredoxin-2D</fullName>
        <ecNumber evidence="1">1.11.1.25</ecNumber>
    </recommendedName>
    <alternativeName>
        <fullName evidence="4">Glutaredoxin-dependent peroxiredoxin</fullName>
    </alternativeName>
    <alternativeName>
        <fullName>Peroxiredoxin IID</fullName>
    </alternativeName>
    <alternativeName>
        <fullName>Thioredoxin peroxidase 2D</fullName>
    </alternativeName>
</protein>
<sequence length="162" mass="17472">MAPITVGDVVPDGTISFFDENDQLQTVSVHSIAAGKKVILFGVPGAFTPTCSMSHVPGFIGKAEELKSKGIDEIICFSVNDPFVMKAWGKTYQENKHVKFVADGSGEYTHLLGLELDLKDKGLGIRSRRFALLLDNLKVTVANVENGGEFTVSSAEDILKAL</sequence>
<evidence type="ECO:0000250" key="1">
    <source>
        <dbReference type="UniProtKB" id="A9PCL4"/>
    </source>
</evidence>
<evidence type="ECO:0000255" key="2">
    <source>
        <dbReference type="PROSITE-ProRule" id="PRU00691"/>
    </source>
</evidence>
<evidence type="ECO:0000269" key="3">
    <source>
    </source>
</evidence>
<evidence type="ECO:0000305" key="4"/>
<evidence type="ECO:0000305" key="5">
    <source>
    </source>
</evidence>
<evidence type="ECO:0000305" key="6">
    <source>
    </source>
</evidence>
<dbReference type="EC" id="1.11.1.25" evidence="1"/>
<dbReference type="EMBL" id="AC002292">
    <property type="protein sequence ID" value="AAB71961.1"/>
    <property type="status" value="ALT_SEQ"/>
    <property type="molecule type" value="Genomic_DNA"/>
</dbReference>
<dbReference type="EMBL" id="CP002684">
    <property type="protein sequence ID" value="AEE33727.1"/>
    <property type="molecule type" value="Genomic_DNA"/>
</dbReference>
<dbReference type="EMBL" id="AY085779">
    <property type="protein sequence ID" value="AAM62996.1"/>
    <property type="molecule type" value="mRNA"/>
</dbReference>
<dbReference type="EMBL" id="AK176203">
    <property type="protein sequence ID" value="BAD43966.1"/>
    <property type="molecule type" value="mRNA"/>
</dbReference>
<dbReference type="PIR" id="G96632">
    <property type="entry name" value="G96632"/>
</dbReference>
<dbReference type="RefSeq" id="NP_564763.1">
    <property type="nucleotide sequence ID" value="NM_104757.4"/>
</dbReference>
<dbReference type="SMR" id="O22711"/>
<dbReference type="FunCoup" id="O22711">
    <property type="interactions" value="1694"/>
</dbReference>
<dbReference type="STRING" id="3702.O22711"/>
<dbReference type="PeroxiBase" id="4355">
    <property type="entry name" value="AtPrxII04"/>
</dbReference>
<dbReference type="PaxDb" id="3702-AT1G60740.1"/>
<dbReference type="ProteomicsDB" id="226297"/>
<dbReference type="EnsemblPlants" id="AT1G60740.1">
    <property type="protein sequence ID" value="AT1G60740.1"/>
    <property type="gene ID" value="AT1G60740"/>
</dbReference>
<dbReference type="GeneID" id="842368"/>
<dbReference type="Gramene" id="AT1G60740.1">
    <property type="protein sequence ID" value="AT1G60740.1"/>
    <property type="gene ID" value="AT1G60740"/>
</dbReference>
<dbReference type="KEGG" id="ath:AT1G60740"/>
<dbReference type="Araport" id="AT1G60740"/>
<dbReference type="TAIR" id="AT1G60740"/>
<dbReference type="eggNOG" id="KOG0541">
    <property type="taxonomic scope" value="Eukaryota"/>
</dbReference>
<dbReference type="HOGENOM" id="CLU_072440_1_2_1"/>
<dbReference type="InParanoid" id="O22711"/>
<dbReference type="OMA" id="VCIIVND"/>
<dbReference type="PhylomeDB" id="O22711"/>
<dbReference type="BioCyc" id="ARA:AT1G60740-MONOMER"/>
<dbReference type="PRO" id="PR:O22711"/>
<dbReference type="Proteomes" id="UP000006548">
    <property type="component" value="Chromosome 1"/>
</dbReference>
<dbReference type="ExpressionAtlas" id="O22711">
    <property type="expression patterns" value="baseline and differential"/>
</dbReference>
<dbReference type="GO" id="GO:0005737">
    <property type="term" value="C:cytoplasm"/>
    <property type="evidence" value="ECO:0007669"/>
    <property type="project" value="UniProtKB-SubCell"/>
</dbReference>
<dbReference type="GO" id="GO:0005886">
    <property type="term" value="C:plasma membrane"/>
    <property type="evidence" value="ECO:0007005"/>
    <property type="project" value="TAIR"/>
</dbReference>
<dbReference type="GO" id="GO:0008379">
    <property type="term" value="F:thioredoxin peroxidase activity"/>
    <property type="evidence" value="ECO:0007669"/>
    <property type="project" value="InterPro"/>
</dbReference>
<dbReference type="GO" id="GO:0034599">
    <property type="term" value="P:cellular response to oxidative stress"/>
    <property type="evidence" value="ECO:0007669"/>
    <property type="project" value="InterPro"/>
</dbReference>
<dbReference type="CDD" id="cd03013">
    <property type="entry name" value="PRX5_like"/>
    <property type="match status" value="1"/>
</dbReference>
<dbReference type="FunFam" id="3.40.30.10:FF:000020">
    <property type="entry name" value="Peroxiredoxin"/>
    <property type="match status" value="1"/>
</dbReference>
<dbReference type="Gene3D" id="3.40.30.10">
    <property type="entry name" value="Glutaredoxin"/>
    <property type="match status" value="1"/>
</dbReference>
<dbReference type="InterPro" id="IPR037944">
    <property type="entry name" value="PRX5-like"/>
</dbReference>
<dbReference type="InterPro" id="IPR013740">
    <property type="entry name" value="Redoxin"/>
</dbReference>
<dbReference type="InterPro" id="IPR036249">
    <property type="entry name" value="Thioredoxin-like_sf"/>
</dbReference>
<dbReference type="InterPro" id="IPR013766">
    <property type="entry name" value="Thioredoxin_domain"/>
</dbReference>
<dbReference type="PANTHER" id="PTHR10430">
    <property type="entry name" value="PEROXIREDOXIN"/>
    <property type="match status" value="1"/>
</dbReference>
<dbReference type="PANTHER" id="PTHR10430:SF8">
    <property type="entry name" value="PEROXIREDOXIN-2A-RELATED"/>
    <property type="match status" value="1"/>
</dbReference>
<dbReference type="Pfam" id="PF08534">
    <property type="entry name" value="Redoxin"/>
    <property type="match status" value="1"/>
</dbReference>
<dbReference type="SUPFAM" id="SSF52833">
    <property type="entry name" value="Thioredoxin-like"/>
    <property type="match status" value="1"/>
</dbReference>
<dbReference type="PROSITE" id="PS51352">
    <property type="entry name" value="THIOREDOXIN_2"/>
    <property type="match status" value="1"/>
</dbReference>
<organism>
    <name type="scientific">Arabidopsis thaliana</name>
    <name type="common">Mouse-ear cress</name>
    <dbReference type="NCBI Taxonomy" id="3702"/>
    <lineage>
        <taxon>Eukaryota</taxon>
        <taxon>Viridiplantae</taxon>
        <taxon>Streptophyta</taxon>
        <taxon>Embryophyta</taxon>
        <taxon>Tracheophyta</taxon>
        <taxon>Spermatophyta</taxon>
        <taxon>Magnoliopsida</taxon>
        <taxon>eudicotyledons</taxon>
        <taxon>Gunneridae</taxon>
        <taxon>Pentapetalae</taxon>
        <taxon>rosids</taxon>
        <taxon>malvids</taxon>
        <taxon>Brassicales</taxon>
        <taxon>Brassicaceae</taxon>
        <taxon>Camelineae</taxon>
        <taxon>Arabidopsis</taxon>
    </lineage>
</organism>
<keyword id="KW-0049">Antioxidant</keyword>
<keyword id="KW-0963">Cytoplasm</keyword>
<keyword id="KW-0560">Oxidoreductase</keyword>
<keyword id="KW-0575">Peroxidase</keyword>
<keyword id="KW-0676">Redox-active center</keyword>
<keyword id="KW-1185">Reference proteome</keyword>
<reference key="1">
    <citation type="journal article" date="2000" name="Nature">
        <title>Sequence and analysis of chromosome 1 of the plant Arabidopsis thaliana.</title>
        <authorList>
            <person name="Theologis A."/>
            <person name="Ecker J.R."/>
            <person name="Palm C.J."/>
            <person name="Federspiel N.A."/>
            <person name="Kaul S."/>
            <person name="White O."/>
            <person name="Alonso J."/>
            <person name="Altafi H."/>
            <person name="Araujo R."/>
            <person name="Bowman C.L."/>
            <person name="Brooks S.Y."/>
            <person name="Buehler E."/>
            <person name="Chan A."/>
            <person name="Chao Q."/>
            <person name="Chen H."/>
            <person name="Cheuk R.F."/>
            <person name="Chin C.W."/>
            <person name="Chung M.K."/>
            <person name="Conn L."/>
            <person name="Conway A.B."/>
            <person name="Conway A.R."/>
            <person name="Creasy T.H."/>
            <person name="Dewar K."/>
            <person name="Dunn P."/>
            <person name="Etgu P."/>
            <person name="Feldblyum T.V."/>
            <person name="Feng J.-D."/>
            <person name="Fong B."/>
            <person name="Fujii C.Y."/>
            <person name="Gill J.E."/>
            <person name="Goldsmith A.D."/>
            <person name="Haas B."/>
            <person name="Hansen N.F."/>
            <person name="Hughes B."/>
            <person name="Huizar L."/>
            <person name="Hunter J.L."/>
            <person name="Jenkins J."/>
            <person name="Johnson-Hopson C."/>
            <person name="Khan S."/>
            <person name="Khaykin E."/>
            <person name="Kim C.J."/>
            <person name="Koo H.L."/>
            <person name="Kremenetskaia I."/>
            <person name="Kurtz D.B."/>
            <person name="Kwan A."/>
            <person name="Lam B."/>
            <person name="Langin-Hooper S."/>
            <person name="Lee A."/>
            <person name="Lee J.M."/>
            <person name="Lenz C.A."/>
            <person name="Li J.H."/>
            <person name="Li Y.-P."/>
            <person name="Lin X."/>
            <person name="Liu S.X."/>
            <person name="Liu Z.A."/>
            <person name="Luros J.S."/>
            <person name="Maiti R."/>
            <person name="Marziali A."/>
            <person name="Militscher J."/>
            <person name="Miranda M."/>
            <person name="Nguyen M."/>
            <person name="Nierman W.C."/>
            <person name="Osborne B.I."/>
            <person name="Pai G."/>
            <person name="Peterson J."/>
            <person name="Pham P.K."/>
            <person name="Rizzo M."/>
            <person name="Rooney T."/>
            <person name="Rowley D."/>
            <person name="Sakano H."/>
            <person name="Salzberg S.L."/>
            <person name="Schwartz J.R."/>
            <person name="Shinn P."/>
            <person name="Southwick A.M."/>
            <person name="Sun H."/>
            <person name="Tallon L.J."/>
            <person name="Tambunga G."/>
            <person name="Toriumi M.J."/>
            <person name="Town C.D."/>
            <person name="Utterback T."/>
            <person name="Van Aken S."/>
            <person name="Vaysberg M."/>
            <person name="Vysotskaia V.S."/>
            <person name="Walker M."/>
            <person name="Wu D."/>
            <person name="Yu G."/>
            <person name="Fraser C.M."/>
            <person name="Venter J.C."/>
            <person name="Davis R.W."/>
        </authorList>
    </citation>
    <scope>NUCLEOTIDE SEQUENCE [LARGE SCALE GENOMIC DNA]</scope>
    <source>
        <strain>cv. Columbia</strain>
    </source>
</reference>
<reference key="2">
    <citation type="journal article" date="2017" name="Plant J.">
        <title>Araport11: a complete reannotation of the Arabidopsis thaliana reference genome.</title>
        <authorList>
            <person name="Cheng C.Y."/>
            <person name="Krishnakumar V."/>
            <person name="Chan A.P."/>
            <person name="Thibaud-Nissen F."/>
            <person name="Schobel S."/>
            <person name="Town C.D."/>
        </authorList>
    </citation>
    <scope>GENOME REANNOTATION</scope>
    <source>
        <strain>cv. Columbia</strain>
    </source>
</reference>
<reference key="3">
    <citation type="submission" date="2002-03" db="EMBL/GenBank/DDBJ databases">
        <title>Full-length cDNA from Arabidopsis thaliana.</title>
        <authorList>
            <person name="Brover V.V."/>
            <person name="Troukhan M.E."/>
            <person name="Alexandrov N.A."/>
            <person name="Lu Y.-P."/>
            <person name="Flavell R.B."/>
            <person name="Feldmann K.A."/>
        </authorList>
    </citation>
    <scope>NUCLEOTIDE SEQUENCE [LARGE SCALE MRNA]</scope>
</reference>
<reference key="4">
    <citation type="submission" date="2004-09" db="EMBL/GenBank/DDBJ databases">
        <title>Large-scale analysis of RIKEN Arabidopsis full-length (RAFL) cDNAs.</title>
        <authorList>
            <person name="Totoki Y."/>
            <person name="Seki M."/>
            <person name="Ishida J."/>
            <person name="Nakajima M."/>
            <person name="Enju A."/>
            <person name="Kamiya A."/>
            <person name="Narusaka M."/>
            <person name="Shin-i T."/>
            <person name="Nakagawa M."/>
            <person name="Sakamoto N."/>
            <person name="Oishi K."/>
            <person name="Kohara Y."/>
            <person name="Kobayashi M."/>
            <person name="Toyoda A."/>
            <person name="Sakaki Y."/>
            <person name="Sakurai T."/>
            <person name="Iida K."/>
            <person name="Akiyama K."/>
            <person name="Satou M."/>
            <person name="Toyoda T."/>
            <person name="Konagaya A."/>
            <person name="Carninci P."/>
            <person name="Kawai J."/>
            <person name="Hayashizaki Y."/>
            <person name="Shinozaki K."/>
        </authorList>
    </citation>
    <scope>NUCLEOTIDE SEQUENCE [LARGE SCALE MRNA]</scope>
    <source>
        <strain>cv. Columbia</strain>
    </source>
</reference>
<reference key="5">
    <citation type="journal article" date="2003" name="Plant Physiol.">
        <title>Resemblance and dissemblance of Arabidopsis type II peroxiredoxins: similar sequences for divergent gene expression, protein localization, and activity.</title>
        <authorList>
            <person name="Brehelin C."/>
            <person name="Meyer E.H."/>
            <person name="de Souris J.-P."/>
            <person name="Bonnard G."/>
            <person name="Meyer Y."/>
        </authorList>
    </citation>
    <scope>TISSUE SPECIFICITY</scope>
</reference>
<reference key="6">
    <citation type="journal article" date="2005" name="Free Radic. Biol. Med.">
        <title>The plant multigenic family of thiol peroxidases.</title>
        <authorList>
            <person name="Rouhier N."/>
            <person name="Jacquot J.-P."/>
        </authorList>
    </citation>
    <scope>GENE FAMILY ORGANIZATION</scope>
    <scope>NOMENCLATURE</scope>
</reference>
<proteinExistence type="evidence at transcript level"/>
<gene>
    <name type="primary">PRXIID</name>
    <name type="ordered locus">At1g60740</name>
    <name type="ORF">F8A5.25</name>
</gene>
<name>PRX2D_ARATH</name>
<feature type="chain" id="PRO_0000056611" description="Peroxiredoxin-2D">
    <location>
        <begin position="1"/>
        <end position="162"/>
    </location>
</feature>
<feature type="domain" description="Thioredoxin" evidence="2">
    <location>
        <begin position="4"/>
        <end position="162"/>
    </location>
</feature>
<feature type="active site" description="Cysteine sulfenic acid (-SOH) intermediate" evidence="1">
    <location>
        <position position="51"/>
    </location>
</feature>
<feature type="sequence conflict" description="In Ref. 3; AAM62996." evidence="4" ref="3">
    <original>G</original>
    <variation>V</variation>
    <location>
        <position position="70"/>
    </location>
</feature>
<feature type="sequence conflict" description="In Ref. 3; AAM62996." evidence="4" ref="3">
    <original>Q</original>
    <variation>T</variation>
    <location>
        <position position="93"/>
    </location>
</feature>
<comment type="function">
    <text evidence="1 6">Thiol-specific peroxidase that catalyzes the reduction of hydrogen peroxide and organic hydroperoxides to water and alcohols, respectively. Plays a role in cell protection against oxidative stress by detoxifying peroxides (By similarity). May be involved in intracellular redox signaling (Probable).</text>
</comment>
<comment type="catalytic activity">
    <reaction evidence="1">
        <text>[glutaredoxin]-dithiol + a hydroperoxide = [glutaredoxin]-disulfide + an alcohol + H2O</text>
        <dbReference type="Rhea" id="RHEA:62624"/>
        <dbReference type="Rhea" id="RHEA-COMP:10729"/>
        <dbReference type="Rhea" id="RHEA-COMP:10730"/>
        <dbReference type="ChEBI" id="CHEBI:15377"/>
        <dbReference type="ChEBI" id="CHEBI:29950"/>
        <dbReference type="ChEBI" id="CHEBI:30879"/>
        <dbReference type="ChEBI" id="CHEBI:35924"/>
        <dbReference type="ChEBI" id="CHEBI:50058"/>
        <dbReference type="EC" id="1.11.1.25"/>
    </reaction>
</comment>
<comment type="subunit">
    <text evidence="1">Monomer.</text>
</comment>
<comment type="subcellular location">
    <subcellularLocation>
        <location evidence="5">Cytoplasm</location>
    </subcellularLocation>
</comment>
<comment type="tissue specificity">
    <text evidence="3">Exclusively expressed in buds and flowers. Also detected in pollen.</text>
</comment>
<comment type="miscellaneous">
    <text evidence="1">The active site is a conserved redox-active cysteine residue, the peroxidatic cysteine (C(P)), which makes the nucleophilic attack on the peroxide substrate. The peroxide oxidizes the C(P)-SH to cysteine sulfenic acid (C(P)-SOH), which then reacts with another cysteine residue, the resolving cysteine (C(R)), to form a disulfide bridge. The disulfide is subsequently reduced by an appropriate electron donor to complete the catalytic cycle. In this 1-Cys peroxiredoxin, no C(R) is present and C(P) instead forms a disulfide with a cysteine from another protein or with a small thiol molecule.</text>
</comment>
<comment type="similarity">
    <text evidence="4">Belongs to the peroxiredoxin family. Prx5 subfamily.</text>
</comment>
<comment type="sequence caution" evidence="4">
    <conflict type="erroneous gene model prediction">
        <sequence resource="EMBL-CDS" id="AAB71961"/>
    </conflict>
</comment>
<accession>O22711</accession>
<accession>Q67ZB5</accession>
<accession>Q8LDV2</accession>
<accession>Q9XEX3</accession>